<proteinExistence type="evidence at protein level"/>
<protein>
    <recommendedName>
        <fullName evidence="10">Osteocalcin 2a</fullName>
        <shortName evidence="6">OmyOC2a</shortName>
    </recommendedName>
    <alternativeName>
        <fullName evidence="6">Bone Gla protein</fullName>
        <shortName evidence="2">BGP</shortName>
    </alternativeName>
    <alternativeName>
        <fullName evidence="2">Gamma-carboxyglutamic acid-containing protein</fullName>
    </alternativeName>
</protein>
<comment type="function">
    <text evidence="7">Binds strongly to apatite and calcium.</text>
</comment>
<comment type="subcellular location">
    <subcellularLocation>
        <location evidence="7">Secreted</location>
    </subcellularLocation>
</comment>
<comment type="PTM">
    <text evidence="4">Gamma-carboxyglutamate residues are formed by vitamin K dependent carboxylation. These residues are essential for the binding of calcium.</text>
</comment>
<comment type="similarity">
    <text evidence="7">Belongs to the osteocalcin/matrix Gla protein family.</text>
</comment>
<keyword id="KW-0091">Biomineralization</keyword>
<keyword id="KW-0106">Calcium</keyword>
<keyword id="KW-0903">Direct protein sequencing</keyword>
<keyword id="KW-1015">Disulfide bond</keyword>
<keyword id="KW-0301">Gamma-carboxyglutamic acid</keyword>
<keyword id="KW-0479">Metal-binding</keyword>
<keyword id="KW-1185">Reference proteome</keyword>
<keyword id="KW-0964">Secreted</keyword>
<keyword id="KW-0732">Signal</keyword>
<organism evidence="10">
    <name type="scientific">Oncorhynchus mykiss</name>
    <name type="common">Rainbow trout</name>
    <name type="synonym">Salmo gairdneri</name>
    <dbReference type="NCBI Taxonomy" id="8022"/>
    <lineage>
        <taxon>Eukaryota</taxon>
        <taxon>Metazoa</taxon>
        <taxon>Chordata</taxon>
        <taxon>Craniata</taxon>
        <taxon>Vertebrata</taxon>
        <taxon>Euteleostomi</taxon>
        <taxon>Actinopterygii</taxon>
        <taxon>Neopterygii</taxon>
        <taxon>Teleostei</taxon>
        <taxon>Protacanthopterygii</taxon>
        <taxon>Salmoniformes</taxon>
        <taxon>Salmonidae</taxon>
        <taxon>Salmoninae</taxon>
        <taxon>Oncorhynchus</taxon>
    </lineage>
</organism>
<gene>
    <name evidence="9" type="ORF">GSONMT00044887001</name>
</gene>
<name>OST2A_ONCMY</name>
<evidence type="ECO:0000250" key="1">
    <source>
        <dbReference type="UniProtKB" id="P02820"/>
    </source>
</evidence>
<evidence type="ECO:0000250" key="2">
    <source>
        <dbReference type="UniProtKB" id="Q800Y1"/>
    </source>
</evidence>
<evidence type="ECO:0000255" key="3"/>
<evidence type="ECO:0000255" key="4">
    <source>
        <dbReference type="PROSITE-ProRule" id="PRU00463"/>
    </source>
</evidence>
<evidence type="ECO:0000256" key="5">
    <source>
        <dbReference type="SAM" id="MobiDB-lite"/>
    </source>
</evidence>
<evidence type="ECO:0000303" key="6">
    <source>
    </source>
</evidence>
<evidence type="ECO:0000305" key="7"/>
<evidence type="ECO:0000305" key="8">
    <source>
    </source>
</evidence>
<evidence type="ECO:0000312" key="9">
    <source>
        <dbReference type="EMBL" id="CDQ79800.1"/>
    </source>
</evidence>
<evidence type="ECO:0000312" key="10">
    <source>
        <dbReference type="EMBL" id="DAA64603.1"/>
    </source>
</evidence>
<accession>A0A024QYT3</accession>
<accession>K9J9B5</accession>
<accession>P86869</accession>
<feature type="signal peptide" evidence="3">
    <location>
        <begin position="1"/>
        <end position="18"/>
    </location>
</feature>
<feature type="propeptide" id="PRO_0000436921" evidence="8">
    <location>
        <begin position="19"/>
        <end position="118"/>
    </location>
</feature>
<feature type="chain" id="PRO_5005739342" description="Osteocalcin 2a" evidence="7">
    <location>
        <begin position="119"/>
        <end position="167"/>
    </location>
</feature>
<feature type="domain" description="Gla" evidence="4">
    <location>
        <begin position="131"/>
        <end position="163"/>
    </location>
</feature>
<feature type="region of interest" description="Disordered" evidence="5">
    <location>
        <begin position="28"/>
        <end position="99"/>
    </location>
</feature>
<feature type="compositionally biased region" description="Low complexity" evidence="5">
    <location>
        <begin position="38"/>
        <end position="87"/>
    </location>
</feature>
<feature type="binding site" evidence="1">
    <location>
        <position position="133"/>
    </location>
    <ligand>
        <name>Ca(2+)</name>
        <dbReference type="ChEBI" id="CHEBI:29108"/>
        <label>3</label>
    </ligand>
</feature>
<feature type="binding site" evidence="1">
    <location>
        <position position="137"/>
    </location>
    <ligand>
        <name>Ca(2+)</name>
        <dbReference type="ChEBI" id="CHEBI:29108"/>
        <label>2</label>
    </ligand>
</feature>
<feature type="binding site" evidence="1">
    <location>
        <position position="140"/>
    </location>
    <ligand>
        <name>Ca(2+)</name>
        <dbReference type="ChEBI" id="CHEBI:29108"/>
        <label>1</label>
    </ligand>
</feature>
<feature type="binding site" evidence="1">
    <location>
        <position position="140"/>
    </location>
    <ligand>
        <name>Ca(2+)</name>
        <dbReference type="ChEBI" id="CHEBI:29108"/>
        <label>2</label>
    </ligand>
</feature>
<feature type="modified residue" description="4-carboxyglutamate" evidence="2">
    <location>
        <position position="133"/>
    </location>
</feature>
<feature type="modified residue" description="4-carboxyglutamate" evidence="4">
    <location>
        <position position="137"/>
    </location>
</feature>
<feature type="modified residue" description="4-carboxyglutamate" evidence="4">
    <location>
        <position position="140"/>
    </location>
</feature>
<feature type="disulfide bond" evidence="4">
    <location>
        <begin position="139"/>
        <end position="145"/>
    </location>
</feature>
<feature type="sequence conflict" description="In Ref. 1; ACS32163." evidence="7" ref="1">
    <original>T</original>
    <variation>M</variation>
    <location>
        <position position="90"/>
    </location>
</feature>
<reference evidence="7" key="1">
    <citation type="journal article" date="2014" name="Fish Physiol. Biochem.">
        <title>Teleost fish osteocalcin 1 and 2 share the ability to bind the calcium mineral phase.</title>
        <authorList>
            <person name="Cavaco S."/>
            <person name="Williamson M.K."/>
            <person name="Rosa J."/>
            <person name="Roberto V."/>
            <person name="Cordeiro O."/>
            <person name="Price P.A."/>
            <person name="Leonor Cancela M."/>
            <person name="Laize V."/>
            <person name="Simes D.C."/>
        </authorList>
    </citation>
    <scope>NUCLEOTIDE SEQUENCE [GENOMIC DNA]</scope>
    <scope>IDENTIFICATION [MRNA]</scope>
    <scope>PROTEIN SEQUENCE OF 119-131</scope>
    <source>
        <tissue evidence="6">Bone</tissue>
    </source>
</reference>
<reference evidence="9" key="2">
    <citation type="journal article" date="2014" name="Nat. Commun.">
        <title>The rainbow trout genome provides novel insights into evolution after whole-genome duplication in vertebrates.</title>
        <authorList>
            <person name="Berthelot C."/>
            <person name="Brunet F."/>
            <person name="Chalopin D."/>
            <person name="Juanchich A."/>
            <person name="Bernard M."/>
            <person name="Noel B."/>
            <person name="Bento P."/>
            <person name="Da Silva C."/>
            <person name="Labadie K."/>
            <person name="Alberti A."/>
            <person name="Aury J.M."/>
            <person name="Louis A."/>
            <person name="Dehais P."/>
            <person name="Bardou P."/>
            <person name="Montfort J."/>
            <person name="Klopp C."/>
            <person name="Cabau C."/>
            <person name="Gaspin C."/>
            <person name="Thorgaard G.H."/>
            <person name="Boussaha M."/>
            <person name="Quillet E."/>
            <person name="Guyomard R."/>
            <person name="Galiana D."/>
            <person name="Bobe J."/>
            <person name="Volff J.N."/>
            <person name="Genet C."/>
            <person name="Wincker P."/>
            <person name="Jaillon O."/>
            <person name="Roest Crollius H."/>
            <person name="Guiguen Y."/>
        </authorList>
    </citation>
    <scope>NUCLEOTIDE SEQUENCE [LARGE SCALE GENOMIC DNA]</scope>
</reference>
<dbReference type="EMBL" id="BK006865">
    <property type="protein sequence ID" value="DAA64603.1"/>
    <property type="molecule type" value="mRNA"/>
</dbReference>
<dbReference type="EMBL" id="FR905504">
    <property type="protein sequence ID" value="CDQ79800.1"/>
    <property type="molecule type" value="Genomic_DNA"/>
</dbReference>
<dbReference type="EMBL" id="GQ241718">
    <property type="protein sequence ID" value="ACS32163.1"/>
    <property type="molecule type" value="Genomic_DNA"/>
</dbReference>
<dbReference type="SMR" id="A0A024QYT3"/>
<dbReference type="STRING" id="8022.A0A024QYT3"/>
<dbReference type="PaxDb" id="8022-A0A024QYT3"/>
<dbReference type="Ensembl" id="ENSOMYT00000070078.2">
    <property type="protein sequence ID" value="ENSOMYP00000064382.1"/>
    <property type="gene ID" value="ENSOMYG00000029798.2"/>
</dbReference>
<dbReference type="GeneTree" id="ENSGT00710000107036"/>
<dbReference type="OrthoDB" id="9950568at2759"/>
<dbReference type="Proteomes" id="UP000193380">
    <property type="component" value="Unassembled WGS sequence"/>
</dbReference>
<dbReference type="Proteomes" id="UP000694395">
    <property type="component" value="Chromosome 17"/>
</dbReference>
<dbReference type="GO" id="GO:0005576">
    <property type="term" value="C:extracellular region"/>
    <property type="evidence" value="ECO:0007669"/>
    <property type="project" value="UniProtKB-SubCell"/>
</dbReference>
<dbReference type="GO" id="GO:0005509">
    <property type="term" value="F:calcium ion binding"/>
    <property type="evidence" value="ECO:0007669"/>
    <property type="project" value="InterPro"/>
</dbReference>
<dbReference type="GO" id="GO:0046848">
    <property type="term" value="F:hydroxyapatite binding"/>
    <property type="evidence" value="ECO:0007669"/>
    <property type="project" value="TreeGrafter"/>
</dbReference>
<dbReference type="GO" id="GO:0008147">
    <property type="term" value="F:structural constituent of bone"/>
    <property type="evidence" value="ECO:0007669"/>
    <property type="project" value="TreeGrafter"/>
</dbReference>
<dbReference type="GO" id="GO:0031214">
    <property type="term" value="P:biomineral tissue development"/>
    <property type="evidence" value="ECO:0007669"/>
    <property type="project" value="UniProtKB-KW"/>
</dbReference>
<dbReference type="GO" id="GO:0060348">
    <property type="term" value="P:bone development"/>
    <property type="evidence" value="ECO:0007669"/>
    <property type="project" value="InterPro"/>
</dbReference>
<dbReference type="GO" id="GO:0001649">
    <property type="term" value="P:osteoblast differentiation"/>
    <property type="evidence" value="ECO:0007669"/>
    <property type="project" value="TreeGrafter"/>
</dbReference>
<dbReference type="GO" id="GO:1900076">
    <property type="term" value="P:regulation of cellular response to insulin stimulus"/>
    <property type="evidence" value="ECO:0007669"/>
    <property type="project" value="InterPro"/>
</dbReference>
<dbReference type="GO" id="GO:0032571">
    <property type="term" value="P:response to vitamin K"/>
    <property type="evidence" value="ECO:0007669"/>
    <property type="project" value="InterPro"/>
</dbReference>
<dbReference type="InterPro" id="IPR035972">
    <property type="entry name" value="GLA-like_dom_SF"/>
</dbReference>
<dbReference type="InterPro" id="IPR000294">
    <property type="entry name" value="GLA_domain"/>
</dbReference>
<dbReference type="InterPro" id="IPR039176">
    <property type="entry name" value="Osteocalcin"/>
</dbReference>
<dbReference type="PANTHER" id="PTHR14235">
    <property type="entry name" value="OSTEOCALCIN"/>
    <property type="match status" value="1"/>
</dbReference>
<dbReference type="PANTHER" id="PTHR14235:SF0">
    <property type="entry name" value="OSTEOCALCIN"/>
    <property type="match status" value="1"/>
</dbReference>
<dbReference type="SUPFAM" id="SSF57630">
    <property type="entry name" value="GLA-domain"/>
    <property type="match status" value="1"/>
</dbReference>
<dbReference type="PROSITE" id="PS50998">
    <property type="entry name" value="GLA_2"/>
    <property type="match status" value="1"/>
</dbReference>
<sequence>MKSLTLLTICAVLSVSLSMNDLALDVVLDPAPDPATEPAPAADSSASSSASSSSSSASDSSASASDSSDSDSSSASSSSSSSESASAEVTTEDPAAATEPEVVIMKRDLASVLLRRKRAAGQAAAAFTLTQVESLSEVCELNLACEHMAETAGIVAAYTAYYGPPPF</sequence>